<evidence type="ECO:0000255" key="1">
    <source>
        <dbReference type="HAMAP-Rule" id="MF_01568"/>
    </source>
</evidence>
<comment type="function">
    <text evidence="1">Has nucleoside phosphatase activity towards nucleoside triphosphates and nucleoside diphosphates.</text>
</comment>
<comment type="catalytic activity">
    <reaction evidence="1">
        <text>a ribonucleoside 5'-triphosphate + H2O = a ribonucleoside 5'-diphosphate + phosphate + H(+)</text>
        <dbReference type="Rhea" id="RHEA:23680"/>
        <dbReference type="ChEBI" id="CHEBI:15377"/>
        <dbReference type="ChEBI" id="CHEBI:15378"/>
        <dbReference type="ChEBI" id="CHEBI:43474"/>
        <dbReference type="ChEBI" id="CHEBI:57930"/>
        <dbReference type="ChEBI" id="CHEBI:61557"/>
        <dbReference type="EC" id="3.6.1.15"/>
    </reaction>
</comment>
<comment type="catalytic activity">
    <reaction evidence="1">
        <text>a ribonucleoside 5'-diphosphate + H2O = a ribonucleoside 5'-phosphate + phosphate + H(+)</text>
        <dbReference type="Rhea" id="RHEA:36799"/>
        <dbReference type="ChEBI" id="CHEBI:15377"/>
        <dbReference type="ChEBI" id="CHEBI:15378"/>
        <dbReference type="ChEBI" id="CHEBI:43474"/>
        <dbReference type="ChEBI" id="CHEBI:57930"/>
        <dbReference type="ChEBI" id="CHEBI:58043"/>
        <dbReference type="EC" id="3.6.1.6"/>
    </reaction>
</comment>
<comment type="cofactor">
    <cofactor evidence="1">
        <name>Mg(2+)</name>
        <dbReference type="ChEBI" id="CHEBI:18420"/>
    </cofactor>
</comment>
<comment type="similarity">
    <text evidence="1">Belongs to the Ntdp family.</text>
</comment>
<feature type="chain" id="PRO_1000215523" description="Nucleoside triphosphate/diphosphate phosphatase">
    <location>
        <begin position="1"/>
        <end position="177"/>
    </location>
</feature>
<feature type="active site" description="Proton donor" evidence="1">
    <location>
        <position position="23"/>
    </location>
</feature>
<feature type="binding site" evidence="1">
    <location>
        <position position="87"/>
    </location>
    <ligand>
        <name>Mg(2+)</name>
        <dbReference type="ChEBI" id="CHEBI:18420"/>
        <label>1</label>
    </ligand>
</feature>
<feature type="binding site" evidence="1">
    <location>
        <position position="103"/>
    </location>
    <ligand>
        <name>Mg(2+)</name>
        <dbReference type="ChEBI" id="CHEBI:18420"/>
        <label>1</label>
    </ligand>
</feature>
<feature type="binding site" evidence="1">
    <location>
        <position position="105"/>
    </location>
    <ligand>
        <name>Mg(2+)</name>
        <dbReference type="ChEBI" id="CHEBI:18420"/>
        <label>2</label>
    </ligand>
</feature>
<feature type="binding site" evidence="1">
    <location>
        <position position="107"/>
    </location>
    <ligand>
        <name>Mg(2+)</name>
        <dbReference type="ChEBI" id="CHEBI:18420"/>
        <label>1</label>
    </ligand>
</feature>
<feature type="binding site" evidence="1">
    <location>
        <position position="107"/>
    </location>
    <ligand>
        <name>Mg(2+)</name>
        <dbReference type="ChEBI" id="CHEBI:18420"/>
        <label>2</label>
    </ligand>
</feature>
<feature type="binding site" evidence="1">
    <location>
        <position position="120"/>
    </location>
    <ligand>
        <name>Mg(2+)</name>
        <dbReference type="ChEBI" id="CHEBI:18420"/>
        <label>2</label>
    </ligand>
</feature>
<feature type="binding site" evidence="1">
    <location>
        <position position="123"/>
    </location>
    <ligand>
        <name>Mg(2+)</name>
        <dbReference type="ChEBI" id="CHEBI:18420"/>
        <label>2</label>
    </ligand>
</feature>
<name>NTDP_STRS7</name>
<protein>
    <recommendedName>
        <fullName evidence="1">Nucleoside triphosphate/diphosphate phosphatase</fullName>
        <ecNumber evidence="1">3.6.1.15</ecNumber>
        <ecNumber evidence="1">3.6.1.6</ecNumber>
    </recommendedName>
</protein>
<keyword id="KW-0378">Hydrolase</keyword>
<keyword id="KW-0460">Magnesium</keyword>
<keyword id="KW-0479">Metal-binding</keyword>
<dbReference type="EC" id="3.6.1.15" evidence="1"/>
<dbReference type="EC" id="3.6.1.6" evidence="1"/>
<dbReference type="EMBL" id="FM204884">
    <property type="protein sequence ID" value="CAW98320.1"/>
    <property type="molecule type" value="Genomic_DNA"/>
</dbReference>
<dbReference type="SMR" id="C0MH45"/>
<dbReference type="KEGG" id="seq:SZO_04220"/>
<dbReference type="eggNOG" id="COG3557">
    <property type="taxonomic scope" value="Bacteria"/>
</dbReference>
<dbReference type="HOGENOM" id="CLU_109787_1_0_9"/>
<dbReference type="Proteomes" id="UP000001368">
    <property type="component" value="Chromosome"/>
</dbReference>
<dbReference type="GO" id="GO:0000287">
    <property type="term" value="F:magnesium ion binding"/>
    <property type="evidence" value="ECO:0007669"/>
    <property type="project" value="UniProtKB-UniRule"/>
</dbReference>
<dbReference type="GO" id="GO:0017110">
    <property type="term" value="F:nucleoside diphosphate phosphatase activity"/>
    <property type="evidence" value="ECO:0007669"/>
    <property type="project" value="UniProtKB-UniRule"/>
</dbReference>
<dbReference type="GO" id="GO:0017111">
    <property type="term" value="F:ribonucleoside triphosphate phosphatase activity"/>
    <property type="evidence" value="ECO:0007669"/>
    <property type="project" value="UniProtKB-UniRule"/>
</dbReference>
<dbReference type="Gene3D" id="2.40.380.10">
    <property type="entry name" value="FomD-like"/>
    <property type="match status" value="1"/>
</dbReference>
<dbReference type="HAMAP" id="MF_01568">
    <property type="entry name" value="Ntdp"/>
    <property type="match status" value="1"/>
</dbReference>
<dbReference type="InterPro" id="IPR007295">
    <property type="entry name" value="DUF402"/>
</dbReference>
<dbReference type="InterPro" id="IPR035930">
    <property type="entry name" value="FomD-like_sf"/>
</dbReference>
<dbReference type="InterPro" id="IPR050212">
    <property type="entry name" value="Ntdp-like"/>
</dbReference>
<dbReference type="InterPro" id="IPR016882">
    <property type="entry name" value="SA1684"/>
</dbReference>
<dbReference type="NCBIfam" id="NF010183">
    <property type="entry name" value="PRK13662.1"/>
    <property type="match status" value="1"/>
</dbReference>
<dbReference type="PANTHER" id="PTHR39159">
    <property type="match status" value="1"/>
</dbReference>
<dbReference type="PANTHER" id="PTHR39159:SF1">
    <property type="entry name" value="UPF0374 PROTEIN YGAC"/>
    <property type="match status" value="1"/>
</dbReference>
<dbReference type="Pfam" id="PF04167">
    <property type="entry name" value="DUF402"/>
    <property type="match status" value="1"/>
</dbReference>
<dbReference type="PIRSF" id="PIRSF028345">
    <property type="entry name" value="UCP028345"/>
    <property type="match status" value="1"/>
</dbReference>
<dbReference type="SUPFAM" id="SSF159234">
    <property type="entry name" value="FomD-like"/>
    <property type="match status" value="1"/>
</dbReference>
<sequence length="177" mass="21196">MKLPKEGDFITIQSYKHDGRLHRTWRDTMVLKTTENALIGVNDHTLVTESDGRRWVTREPAIVYFHKKYWFNIIAMIRDNGVSYYCNLASPYLMDAEALKYIDYDLDVKVFADGEKRLLDVDEYEMHKQEMHYSPNLDFILKENVKLLVDWINKEKGPFSKAYVSIWYKRYLELKNR</sequence>
<proteinExistence type="inferred from homology"/>
<accession>C0MH45</accession>
<gene>
    <name type="ordered locus">SZO_04220</name>
</gene>
<organism>
    <name type="scientific">Streptococcus equi subsp. zooepidemicus (strain H70)</name>
    <dbReference type="NCBI Taxonomy" id="553483"/>
    <lineage>
        <taxon>Bacteria</taxon>
        <taxon>Bacillati</taxon>
        <taxon>Bacillota</taxon>
        <taxon>Bacilli</taxon>
        <taxon>Lactobacillales</taxon>
        <taxon>Streptococcaceae</taxon>
        <taxon>Streptococcus</taxon>
    </lineage>
</organism>
<reference key="1">
    <citation type="journal article" date="2009" name="PLoS Pathog.">
        <title>Genomic evidence for the evolution of Streptococcus equi: host restriction, increased virulence, and genetic exchange with human pathogens.</title>
        <authorList>
            <person name="Holden M.T.G."/>
            <person name="Heather Z."/>
            <person name="Paillot R."/>
            <person name="Steward K.F."/>
            <person name="Webb K."/>
            <person name="Ainslie F."/>
            <person name="Jourdan T."/>
            <person name="Bason N.C."/>
            <person name="Holroyd N.E."/>
            <person name="Mungall K."/>
            <person name="Quail M.A."/>
            <person name="Sanders M."/>
            <person name="Simmonds M."/>
            <person name="Willey D."/>
            <person name="Brooks K."/>
            <person name="Aanensen D.M."/>
            <person name="Spratt B.G."/>
            <person name="Jolley K.A."/>
            <person name="Maiden M.C.J."/>
            <person name="Kehoe M."/>
            <person name="Chanter N."/>
            <person name="Bentley S.D."/>
            <person name="Robinson C."/>
            <person name="Maskell D.J."/>
            <person name="Parkhill J."/>
            <person name="Waller A.S."/>
        </authorList>
    </citation>
    <scope>NUCLEOTIDE SEQUENCE [LARGE SCALE GENOMIC DNA]</scope>
    <source>
        <strain>H70</strain>
    </source>
</reference>